<name>PDXS_MYCA1</name>
<gene>
    <name evidence="1" type="primary">pdxS</name>
    <name type="ordered locus">MAV_3484</name>
</gene>
<accession>A0QIC8</accession>
<keyword id="KW-0456">Lyase</keyword>
<keyword id="KW-0663">Pyridoxal phosphate</keyword>
<keyword id="KW-0704">Schiff base</keyword>
<protein>
    <recommendedName>
        <fullName evidence="1">Pyridoxal 5'-phosphate synthase subunit PdxS</fullName>
        <shortName evidence="1">PLP synthase subunit PdxS</shortName>
        <ecNumber evidence="1">4.3.3.6</ecNumber>
    </recommendedName>
    <alternativeName>
        <fullName evidence="1">Pdx1</fullName>
    </alternativeName>
</protein>
<proteinExistence type="inferred from homology"/>
<evidence type="ECO:0000255" key="1">
    <source>
        <dbReference type="HAMAP-Rule" id="MF_01824"/>
    </source>
</evidence>
<organism>
    <name type="scientific">Mycobacterium avium (strain 104)</name>
    <dbReference type="NCBI Taxonomy" id="243243"/>
    <lineage>
        <taxon>Bacteria</taxon>
        <taxon>Bacillati</taxon>
        <taxon>Actinomycetota</taxon>
        <taxon>Actinomycetes</taxon>
        <taxon>Mycobacteriales</taxon>
        <taxon>Mycobacteriaceae</taxon>
        <taxon>Mycobacterium</taxon>
        <taxon>Mycobacterium avium complex (MAC)</taxon>
    </lineage>
</organism>
<feature type="chain" id="PRO_1000070388" description="Pyridoxal 5'-phosphate synthase subunit PdxS">
    <location>
        <begin position="1"/>
        <end position="303"/>
    </location>
</feature>
<feature type="active site" description="Schiff-base intermediate with D-ribose 5-phosphate" evidence="1">
    <location>
        <position position="90"/>
    </location>
</feature>
<feature type="binding site" evidence="1">
    <location>
        <position position="33"/>
    </location>
    <ligand>
        <name>D-ribose 5-phosphate</name>
        <dbReference type="ChEBI" id="CHEBI:78346"/>
    </ligand>
</feature>
<feature type="binding site" evidence="1">
    <location>
        <position position="162"/>
    </location>
    <ligand>
        <name>D-ribose 5-phosphate</name>
        <dbReference type="ChEBI" id="CHEBI:78346"/>
    </ligand>
</feature>
<feature type="binding site" evidence="1">
    <location>
        <position position="174"/>
    </location>
    <ligand>
        <name>D-glyceraldehyde 3-phosphate</name>
        <dbReference type="ChEBI" id="CHEBI:59776"/>
    </ligand>
</feature>
<feature type="binding site" evidence="1">
    <location>
        <position position="223"/>
    </location>
    <ligand>
        <name>D-ribose 5-phosphate</name>
        <dbReference type="ChEBI" id="CHEBI:78346"/>
    </ligand>
</feature>
<feature type="binding site" evidence="1">
    <location>
        <begin position="244"/>
        <end position="245"/>
    </location>
    <ligand>
        <name>D-ribose 5-phosphate</name>
        <dbReference type="ChEBI" id="CHEBI:78346"/>
    </ligand>
</feature>
<dbReference type="EC" id="4.3.3.6" evidence="1"/>
<dbReference type="EMBL" id="CP000479">
    <property type="protein sequence ID" value="ABK68399.1"/>
    <property type="molecule type" value="Genomic_DNA"/>
</dbReference>
<dbReference type="SMR" id="A0QIC8"/>
<dbReference type="KEGG" id="mav:MAV_3484"/>
<dbReference type="HOGENOM" id="CLU_055352_1_0_11"/>
<dbReference type="UniPathway" id="UPA00245"/>
<dbReference type="Proteomes" id="UP000001574">
    <property type="component" value="Chromosome"/>
</dbReference>
<dbReference type="GO" id="GO:0036381">
    <property type="term" value="F:pyridoxal 5'-phosphate synthase (glutamine hydrolysing) activity"/>
    <property type="evidence" value="ECO:0007669"/>
    <property type="project" value="UniProtKB-UniRule"/>
</dbReference>
<dbReference type="GO" id="GO:0006520">
    <property type="term" value="P:amino acid metabolic process"/>
    <property type="evidence" value="ECO:0007669"/>
    <property type="project" value="TreeGrafter"/>
</dbReference>
<dbReference type="GO" id="GO:0042823">
    <property type="term" value="P:pyridoxal phosphate biosynthetic process"/>
    <property type="evidence" value="ECO:0007669"/>
    <property type="project" value="UniProtKB-UniRule"/>
</dbReference>
<dbReference type="GO" id="GO:0008615">
    <property type="term" value="P:pyridoxine biosynthetic process"/>
    <property type="evidence" value="ECO:0007669"/>
    <property type="project" value="TreeGrafter"/>
</dbReference>
<dbReference type="CDD" id="cd04727">
    <property type="entry name" value="pdxS"/>
    <property type="match status" value="1"/>
</dbReference>
<dbReference type="FunFam" id="3.20.20.70:FF:000001">
    <property type="entry name" value="Pyridoxine biosynthesis protein PDX1"/>
    <property type="match status" value="1"/>
</dbReference>
<dbReference type="Gene3D" id="3.20.20.70">
    <property type="entry name" value="Aldolase class I"/>
    <property type="match status" value="1"/>
</dbReference>
<dbReference type="HAMAP" id="MF_01824">
    <property type="entry name" value="PdxS"/>
    <property type="match status" value="1"/>
</dbReference>
<dbReference type="InterPro" id="IPR013785">
    <property type="entry name" value="Aldolase_TIM"/>
</dbReference>
<dbReference type="InterPro" id="IPR001852">
    <property type="entry name" value="PdxS/SNZ"/>
</dbReference>
<dbReference type="InterPro" id="IPR033755">
    <property type="entry name" value="PdxS/SNZ_N"/>
</dbReference>
<dbReference type="InterPro" id="IPR011060">
    <property type="entry name" value="RibuloseP-bd_barrel"/>
</dbReference>
<dbReference type="NCBIfam" id="NF003215">
    <property type="entry name" value="PRK04180.1"/>
    <property type="match status" value="1"/>
</dbReference>
<dbReference type="NCBIfam" id="TIGR00343">
    <property type="entry name" value="pyridoxal 5'-phosphate synthase lyase subunit PdxS"/>
    <property type="match status" value="1"/>
</dbReference>
<dbReference type="PANTHER" id="PTHR31829">
    <property type="entry name" value="PYRIDOXAL 5'-PHOSPHATE SYNTHASE SUBUNIT SNZ1-RELATED"/>
    <property type="match status" value="1"/>
</dbReference>
<dbReference type="PANTHER" id="PTHR31829:SF0">
    <property type="entry name" value="PYRIDOXAL 5'-PHOSPHATE SYNTHASE SUBUNIT SNZ1-RELATED"/>
    <property type="match status" value="1"/>
</dbReference>
<dbReference type="Pfam" id="PF01680">
    <property type="entry name" value="SOR_SNZ"/>
    <property type="match status" value="1"/>
</dbReference>
<dbReference type="PIRSF" id="PIRSF029271">
    <property type="entry name" value="Pdx1"/>
    <property type="match status" value="1"/>
</dbReference>
<dbReference type="SUPFAM" id="SSF51366">
    <property type="entry name" value="Ribulose-phoshate binding barrel"/>
    <property type="match status" value="1"/>
</dbReference>
<dbReference type="PROSITE" id="PS01235">
    <property type="entry name" value="PDXS_SNZ_1"/>
    <property type="match status" value="1"/>
</dbReference>
<dbReference type="PROSITE" id="PS51129">
    <property type="entry name" value="PDXS_SNZ_2"/>
    <property type="match status" value="1"/>
</dbReference>
<reference key="1">
    <citation type="submission" date="2006-10" db="EMBL/GenBank/DDBJ databases">
        <authorList>
            <person name="Fleischmann R.D."/>
            <person name="Dodson R.J."/>
            <person name="Haft D.H."/>
            <person name="Merkel J.S."/>
            <person name="Nelson W.C."/>
            <person name="Fraser C.M."/>
        </authorList>
    </citation>
    <scope>NUCLEOTIDE SEQUENCE [LARGE SCALE GENOMIC DNA]</scope>
    <source>
        <strain>104</strain>
    </source>
</reference>
<comment type="function">
    <text evidence="1">Catalyzes the formation of pyridoxal 5'-phosphate from ribose 5-phosphate (RBP), glyceraldehyde 3-phosphate (G3P) and ammonia. The ammonia is provided by the PdxT subunit. Can also use ribulose 5-phosphate and dihydroxyacetone phosphate as substrates, resulting from enzyme-catalyzed isomerization of RBP and G3P, respectively.</text>
</comment>
<comment type="catalytic activity">
    <reaction evidence="1">
        <text>aldehydo-D-ribose 5-phosphate + D-glyceraldehyde 3-phosphate + L-glutamine = pyridoxal 5'-phosphate + L-glutamate + phosphate + 3 H2O + H(+)</text>
        <dbReference type="Rhea" id="RHEA:31507"/>
        <dbReference type="ChEBI" id="CHEBI:15377"/>
        <dbReference type="ChEBI" id="CHEBI:15378"/>
        <dbReference type="ChEBI" id="CHEBI:29985"/>
        <dbReference type="ChEBI" id="CHEBI:43474"/>
        <dbReference type="ChEBI" id="CHEBI:58273"/>
        <dbReference type="ChEBI" id="CHEBI:58359"/>
        <dbReference type="ChEBI" id="CHEBI:59776"/>
        <dbReference type="ChEBI" id="CHEBI:597326"/>
        <dbReference type="EC" id="4.3.3.6"/>
    </reaction>
</comment>
<comment type="pathway">
    <text evidence="1">Cofactor biosynthesis; pyridoxal 5'-phosphate biosynthesis.</text>
</comment>
<comment type="subunit">
    <text evidence="1">In the presence of PdxT, forms a dodecamer of heterodimers.</text>
</comment>
<comment type="similarity">
    <text evidence="1">Belongs to the PdxS/SNZ family.</text>
</comment>
<sequence>MNTAHSPDGSGRTGTARVKRGMAEMLKGGVIMDVVTPEQAKIAEGAGAVAVMALERVPADIRAQGGVSRMSDPDMIEGIISAVTIPVMAKARIGHFVEAQILQSLGVDYIDESEVLTPADYTHHIDKWKFTVPFVCGATNLGEALRRINEGAAMIRSKGEAGTGDVSNATTHMRAIGGEIRRLMSLSEDELYVAAKELQAPYELVVEVARAGKLPVTLFTAGGIATPADAAMMMQLGAEGVFVGSGIFKSGDPAQRAAAIVKATTFYDDPDVLAKVSRGLGEAMVGINVEQIAQPERLAERGW</sequence>